<feature type="chain" id="PRO_0000103714" description="Uncharacterized protein Rv0628c">
    <location>
        <begin position="1"/>
        <end position="383"/>
    </location>
</feature>
<feature type="transmembrane region" description="Helical" evidence="1">
    <location>
        <begin position="49"/>
        <end position="69"/>
    </location>
</feature>
<feature type="transmembrane region" description="Helical" evidence="1">
    <location>
        <begin position="347"/>
        <end position="367"/>
    </location>
</feature>
<protein>
    <recommendedName>
        <fullName>Uncharacterized protein Rv0628c</fullName>
    </recommendedName>
</protein>
<keyword id="KW-1003">Cell membrane</keyword>
<keyword id="KW-0472">Membrane</keyword>
<keyword id="KW-1185">Reference proteome</keyword>
<keyword id="KW-0812">Transmembrane</keyword>
<keyword id="KW-1133">Transmembrane helix</keyword>
<comment type="subcellular location">
    <subcellularLocation>
        <location evidence="2">Cell membrane</location>
        <topology evidence="2">Multi-pass membrane protein</topology>
    </subcellularLocation>
</comment>
<comment type="similarity">
    <text evidence="2">To M.tuberculosis Rv0874c.</text>
</comment>
<gene>
    <name type="ordered locus">Rv0628c</name>
    <name type="ORF">MTCY20H10.09c</name>
</gene>
<sequence length="383" mass="39606">MRIGVGVSTAPDVRRAAAEAAAHAREELAGGTPALAVLLGSRSHTDQAVDLLAAVQASVEPAALIGCVAQGIVAGRHELENEPAVAVWLASGPPAETFHLDFVRTGSGALITGYRFDRTAHDLHLLLPDPYSFPSNLLIEHLNTDLPGTTVVGGVVSGGRRRGDTRLFRDRDVLTSGLVGVRLPGAHSVSVVSQGCRPIGEPYIVTGADGAVITELGGRPPLHRLREIVLGMAPDEQELVSRGLQIGIVVDEHLAVPGQGDFLIRGLLGADPTTGAIGIGEVVEVGATVQFQVRDAAAADKDLRLAVERAAAELPGPPVGGLLFTCNGRGRRMFGVTDHDASTIEDLLGGIPLAGFFAAGEIGPVAGHNALHGFTASMALFVD</sequence>
<organism>
    <name type="scientific">Mycobacterium tuberculosis (strain ATCC 25618 / H37Rv)</name>
    <dbReference type="NCBI Taxonomy" id="83332"/>
    <lineage>
        <taxon>Bacteria</taxon>
        <taxon>Bacillati</taxon>
        <taxon>Actinomycetota</taxon>
        <taxon>Actinomycetes</taxon>
        <taxon>Mycobacteriales</taxon>
        <taxon>Mycobacteriaceae</taxon>
        <taxon>Mycobacterium</taxon>
        <taxon>Mycobacterium tuberculosis complex</taxon>
    </lineage>
</organism>
<accession>P9WKS7</accession>
<accession>L0T611</accession>
<accession>P64729</accession>
<accession>P96918</accession>
<dbReference type="EMBL" id="AL123456">
    <property type="protein sequence ID" value="CCP43369.1"/>
    <property type="molecule type" value="Genomic_DNA"/>
</dbReference>
<dbReference type="PIR" id="A70612">
    <property type="entry name" value="A70612"/>
</dbReference>
<dbReference type="RefSeq" id="NP_215142.1">
    <property type="nucleotide sequence ID" value="NC_000962.3"/>
</dbReference>
<dbReference type="RefSeq" id="WP_003403248.1">
    <property type="nucleotide sequence ID" value="NZ_NVQJ01000033.1"/>
</dbReference>
<dbReference type="STRING" id="83332.Rv0628c"/>
<dbReference type="PaxDb" id="83332-Rv0628c"/>
<dbReference type="DNASU" id="887986"/>
<dbReference type="GeneID" id="887986"/>
<dbReference type="KEGG" id="mtu:Rv0628c"/>
<dbReference type="KEGG" id="mtv:RVBD_0628c"/>
<dbReference type="TubercuList" id="Rv0628c"/>
<dbReference type="eggNOG" id="COG4398">
    <property type="taxonomic scope" value="Bacteria"/>
</dbReference>
<dbReference type="InParanoid" id="P9WKS7"/>
<dbReference type="OrthoDB" id="9770435at2"/>
<dbReference type="PhylomeDB" id="P9WKS7"/>
<dbReference type="Proteomes" id="UP000001584">
    <property type="component" value="Chromosome"/>
</dbReference>
<dbReference type="GO" id="GO:0005886">
    <property type="term" value="C:plasma membrane"/>
    <property type="evidence" value="ECO:0007669"/>
    <property type="project" value="UniProtKB-SubCell"/>
</dbReference>
<dbReference type="InterPro" id="IPR019494">
    <property type="entry name" value="FIST_C"/>
</dbReference>
<dbReference type="InterPro" id="IPR013702">
    <property type="entry name" value="FIST_domain_N"/>
</dbReference>
<dbReference type="InterPro" id="IPR016741">
    <property type="entry name" value="UCP018953"/>
</dbReference>
<dbReference type="PANTHER" id="PTHR14939">
    <property type="entry name" value="F-BOX ONLY PROTEIN 22"/>
    <property type="match status" value="1"/>
</dbReference>
<dbReference type="PANTHER" id="PTHR14939:SF5">
    <property type="entry name" value="F-BOX ONLY PROTEIN 22"/>
    <property type="match status" value="1"/>
</dbReference>
<dbReference type="Pfam" id="PF08495">
    <property type="entry name" value="FIST"/>
    <property type="match status" value="1"/>
</dbReference>
<dbReference type="Pfam" id="PF10442">
    <property type="entry name" value="FIST_C"/>
    <property type="match status" value="1"/>
</dbReference>
<dbReference type="PIRSF" id="PIRSF018953">
    <property type="entry name" value="UCP018953"/>
    <property type="match status" value="1"/>
</dbReference>
<dbReference type="SMART" id="SM00897">
    <property type="entry name" value="FIST"/>
    <property type="match status" value="1"/>
</dbReference>
<dbReference type="SMART" id="SM01204">
    <property type="entry name" value="FIST_C"/>
    <property type="match status" value="1"/>
</dbReference>
<proteinExistence type="evidence at protein level"/>
<reference key="1">
    <citation type="journal article" date="1998" name="Nature">
        <title>Deciphering the biology of Mycobacterium tuberculosis from the complete genome sequence.</title>
        <authorList>
            <person name="Cole S.T."/>
            <person name="Brosch R."/>
            <person name="Parkhill J."/>
            <person name="Garnier T."/>
            <person name="Churcher C.M."/>
            <person name="Harris D.E."/>
            <person name="Gordon S.V."/>
            <person name="Eiglmeier K."/>
            <person name="Gas S."/>
            <person name="Barry C.E. III"/>
            <person name="Tekaia F."/>
            <person name="Badcock K."/>
            <person name="Basham D."/>
            <person name="Brown D."/>
            <person name="Chillingworth T."/>
            <person name="Connor R."/>
            <person name="Davies R.M."/>
            <person name="Devlin K."/>
            <person name="Feltwell T."/>
            <person name="Gentles S."/>
            <person name="Hamlin N."/>
            <person name="Holroyd S."/>
            <person name="Hornsby T."/>
            <person name="Jagels K."/>
            <person name="Krogh A."/>
            <person name="McLean J."/>
            <person name="Moule S."/>
            <person name="Murphy L.D."/>
            <person name="Oliver S."/>
            <person name="Osborne J."/>
            <person name="Quail M.A."/>
            <person name="Rajandream M.A."/>
            <person name="Rogers J."/>
            <person name="Rutter S."/>
            <person name="Seeger K."/>
            <person name="Skelton S."/>
            <person name="Squares S."/>
            <person name="Squares R."/>
            <person name="Sulston J.E."/>
            <person name="Taylor K."/>
            <person name="Whitehead S."/>
            <person name="Barrell B.G."/>
        </authorList>
    </citation>
    <scope>NUCLEOTIDE SEQUENCE [LARGE SCALE GENOMIC DNA]</scope>
    <source>
        <strain>ATCC 25618 / H37Rv</strain>
    </source>
</reference>
<reference key="2">
    <citation type="journal article" date="2011" name="Mol. Cell. Proteomics">
        <title>Proteogenomic analysis of Mycobacterium tuberculosis by high resolution mass spectrometry.</title>
        <authorList>
            <person name="Kelkar D.S."/>
            <person name="Kumar D."/>
            <person name="Kumar P."/>
            <person name="Balakrishnan L."/>
            <person name="Muthusamy B."/>
            <person name="Yadav A.K."/>
            <person name="Shrivastava P."/>
            <person name="Marimuthu A."/>
            <person name="Anand S."/>
            <person name="Sundaram H."/>
            <person name="Kingsbury R."/>
            <person name="Harsha H.C."/>
            <person name="Nair B."/>
            <person name="Prasad T.S."/>
            <person name="Chauhan D.S."/>
            <person name="Katoch K."/>
            <person name="Katoch V.M."/>
            <person name="Kumar P."/>
            <person name="Chaerkady R."/>
            <person name="Ramachandran S."/>
            <person name="Dash D."/>
            <person name="Pandey A."/>
        </authorList>
    </citation>
    <scope>IDENTIFICATION BY MASS SPECTROMETRY [LARGE SCALE ANALYSIS]</scope>
    <source>
        <strain>ATCC 25618 / H37Rv</strain>
    </source>
</reference>
<name>Y628_MYCTU</name>
<evidence type="ECO:0000255" key="1"/>
<evidence type="ECO:0000305" key="2"/>